<evidence type="ECO:0000256" key="1">
    <source>
        <dbReference type="SAM" id="MobiDB-lite"/>
    </source>
</evidence>
<evidence type="ECO:0000305" key="2"/>
<dbReference type="EMBL" id="X13498">
    <property type="protein sequence ID" value="CAA31853.1"/>
    <property type="molecule type" value="mRNA"/>
</dbReference>
<dbReference type="EMBL" id="X78205">
    <property type="protein sequence ID" value="CAA55041.1"/>
    <property type="molecule type" value="Genomic_DNA"/>
</dbReference>
<dbReference type="PIR" id="S08313">
    <property type="entry name" value="S08313"/>
</dbReference>
<dbReference type="SMR" id="P14928"/>
<dbReference type="ExpressionAtlas" id="P14928">
    <property type="expression patterns" value="baseline and differential"/>
</dbReference>
<dbReference type="GO" id="GO:0005634">
    <property type="term" value="C:nucleus"/>
    <property type="evidence" value="ECO:0007669"/>
    <property type="project" value="TreeGrafter"/>
</dbReference>
<dbReference type="Gene3D" id="6.10.140.1430">
    <property type="match status" value="1"/>
</dbReference>
<dbReference type="PANTHER" id="PTHR47372">
    <property type="entry name" value="DAUER UP-REGULATED-RELATED"/>
    <property type="match status" value="1"/>
</dbReference>
<dbReference type="PANTHER" id="PTHR47372:SF11">
    <property type="entry name" value="RE19971P"/>
    <property type="match status" value="1"/>
</dbReference>
<dbReference type="SUPFAM" id="SSF58113">
    <property type="entry name" value="Apolipoprotein A-I"/>
    <property type="match status" value="1"/>
</dbReference>
<organism>
    <name type="scientific">Hordeum vulgare</name>
    <name type="common">Barley</name>
    <dbReference type="NCBI Taxonomy" id="4513"/>
    <lineage>
        <taxon>Eukaryota</taxon>
        <taxon>Viridiplantae</taxon>
        <taxon>Streptophyta</taxon>
        <taxon>Embryophyta</taxon>
        <taxon>Tracheophyta</taxon>
        <taxon>Spermatophyta</taxon>
        <taxon>Magnoliopsida</taxon>
        <taxon>Liliopsida</taxon>
        <taxon>Poales</taxon>
        <taxon>Poaceae</taxon>
        <taxon>BOP clade</taxon>
        <taxon>Pooideae</taxon>
        <taxon>Triticodae</taxon>
        <taxon>Triticeae</taxon>
        <taxon>Hordeinae</taxon>
        <taxon>Hordeum</taxon>
    </lineage>
</organism>
<keyword id="KW-0677">Repeat</keyword>
<comment type="induction">
    <text>By abscisic acid (ABA).</text>
</comment>
<comment type="similarity">
    <text evidence="2">Belongs to the LEA type 4 family.</text>
</comment>
<feature type="chain" id="PRO_0000221225" description="ABA-inducible protein PHV A1">
    <location>
        <begin position="1"/>
        <end position="213"/>
    </location>
</feature>
<feature type="repeat" description="LEA 11-mer repeat">
    <location>
        <begin position="27"/>
        <end position="37"/>
    </location>
</feature>
<feature type="repeat" description="LEA 11-mer repeat">
    <location>
        <begin position="38"/>
        <end position="48"/>
    </location>
</feature>
<feature type="repeat" description="LEA 11-mer repeat">
    <location>
        <begin position="49"/>
        <end position="59"/>
    </location>
</feature>
<feature type="repeat" description="LEA 11-mer repeat">
    <location>
        <begin position="60"/>
        <end position="70"/>
    </location>
</feature>
<feature type="repeat" description="LEA 11-mer repeat">
    <location>
        <begin position="78"/>
        <end position="88"/>
    </location>
</feature>
<feature type="repeat" description="LEA 11-mer repeat">
    <location>
        <begin position="89"/>
        <end position="99"/>
    </location>
</feature>
<feature type="repeat" description="LEA 11-mer repeat">
    <location>
        <begin position="111"/>
        <end position="121"/>
    </location>
</feature>
<feature type="repeat" description="LEA 11-mer repeat">
    <location>
        <begin position="122"/>
        <end position="132"/>
    </location>
</feature>
<feature type="repeat" description="LEA 11-mer repeat">
    <location>
        <begin position="133"/>
        <end position="143"/>
    </location>
</feature>
<feature type="region of interest" description="Disordered" evidence="1">
    <location>
        <begin position="1"/>
        <end position="158"/>
    </location>
</feature>
<feature type="region of interest" description="11 X 11 AA tandem repeats of T-E-A-A-K-Q-K-A-A-E-T">
    <location>
        <begin position="27"/>
        <end position="143"/>
    </location>
</feature>
<feature type="region of interest" description="Disordered" evidence="1">
    <location>
        <begin position="182"/>
        <end position="213"/>
    </location>
</feature>
<feature type="compositionally biased region" description="Basic and acidic residues" evidence="1">
    <location>
        <begin position="13"/>
        <end position="23"/>
    </location>
</feature>
<feature type="compositionally biased region" description="Basic and acidic residues" evidence="1">
    <location>
        <begin position="41"/>
        <end position="74"/>
    </location>
</feature>
<feature type="compositionally biased region" description="Basic and acidic residues" evidence="1">
    <location>
        <begin position="81"/>
        <end position="98"/>
    </location>
</feature>
<feature type="compositionally biased region" description="Basic and acidic residues" evidence="1">
    <location>
        <begin position="109"/>
        <end position="140"/>
    </location>
</feature>
<feature type="compositionally biased region" description="Low complexity" evidence="1">
    <location>
        <begin position="193"/>
        <end position="213"/>
    </location>
</feature>
<reference key="1">
    <citation type="journal article" date="1988" name="Plant Mol. Biol.">
        <title>Cloning and characterization of a cDNA encoding a mRNA rapidly-induced by ABA in barley aleurone layers.</title>
        <authorList>
            <person name="Hong B."/>
            <person name="Uknes S.J."/>
            <person name="Ho T.D."/>
        </authorList>
        <dbReference type="AGRICOLA" id="IND92000027"/>
    </citation>
    <scope>NUCLEOTIDE SEQUENCE [MRNA]</scope>
    <source>
        <strain>cv. Himalaya</strain>
        <tissue>Aleurone</tissue>
    </source>
</reference>
<reference key="2">
    <citation type="journal article" date="1994" name="Plant Mol. Biol.">
        <title>Structure and promoter analysis of an ABA- and stress-regulated barley gene, HVA1.</title>
        <authorList>
            <person name="Straub P.F."/>
            <person name="Shen Q."/>
            <person name="Ho D.T.H."/>
        </authorList>
    </citation>
    <scope>NUCLEOTIDE SEQUENCE [GENOMIC DNA]</scope>
    <source>
        <strain>cv. Himalaya</strain>
        <tissue>Aleurone</tissue>
    </source>
</reference>
<gene>
    <name type="primary">HVA1</name>
</gene>
<name>LEA1_HORVU</name>
<proteinExistence type="evidence at transcript level"/>
<sequence length="213" mass="21820">MASNQNQGSYHAGETKARTEEKTGQMMGATKQKAGQTTEATKQKAGETAEATKQKTGETAEAAKQKAAEAKDKTAQTAQAAKDKTYETAQAAKERAAQGKDQTGSALGEKTEAAKQKAAETTEAAKQKAAEATEAAKQKASDTAQYTKESAVAGKDKTGSVLQQAGETVVNAVVGAKDAVANTLGMGGDNTSATKDATTGATVKDTTTTTRNH</sequence>
<protein>
    <recommendedName>
        <fullName>ABA-inducible protein PHV A1</fullName>
    </recommendedName>
</protein>
<accession>P14928</accession>